<comment type="function">
    <text evidence="1">The RuvA-RuvB-RuvC complex processes Holliday junction (HJ) DNA during genetic recombination and DNA repair, while the RuvA-RuvB complex plays an important role in the rescue of blocked DNA replication forks via replication fork reversal (RFR). RuvA specifically binds to HJ cruciform DNA, conferring on it an open structure. The RuvB hexamer acts as an ATP-dependent pump, pulling dsDNA into and through the RuvAB complex. HJ branch migration allows RuvC to scan DNA until it finds its consensus sequence, where it cleaves and resolves the cruciform DNA.</text>
</comment>
<comment type="subunit">
    <text evidence="1">Homotetramer. Forms an RuvA(8)-RuvB(12)-Holliday junction (HJ) complex. HJ DNA is sandwiched between 2 RuvA tetramers; dsDNA enters through RuvA and exits via RuvB. An RuvB hexamer assembles on each DNA strand where it exits the tetramer. Each RuvB hexamer is contacted by two RuvA subunits (via domain III) on 2 adjacent RuvB subunits; this complex drives branch migration. In the full resolvosome a probable DNA-RuvA(4)-RuvB(12)-RuvC(2) complex forms which resolves the HJ.</text>
</comment>
<comment type="subcellular location">
    <subcellularLocation>
        <location evidence="1">Cytoplasm</location>
    </subcellularLocation>
</comment>
<comment type="domain">
    <text evidence="1">Has three domains with a flexible linker between the domains II and III and assumes an 'L' shape. Domain III is highly mobile and contacts RuvB.</text>
</comment>
<comment type="similarity">
    <text evidence="1">Belongs to the RuvA family.</text>
</comment>
<keyword id="KW-0963">Cytoplasm</keyword>
<keyword id="KW-0227">DNA damage</keyword>
<keyword id="KW-0233">DNA recombination</keyword>
<keyword id="KW-0234">DNA repair</keyword>
<keyword id="KW-0238">DNA-binding</keyword>
<name>RUVA_GEOSW</name>
<gene>
    <name evidence="1" type="primary">ruvA</name>
    <name type="ordered locus">GWCH70_2522</name>
</gene>
<proteinExistence type="inferred from homology"/>
<evidence type="ECO:0000255" key="1">
    <source>
        <dbReference type="HAMAP-Rule" id="MF_00031"/>
    </source>
</evidence>
<protein>
    <recommendedName>
        <fullName evidence="1">Holliday junction branch migration complex subunit RuvA</fullName>
    </recommendedName>
</protein>
<organism>
    <name type="scientific">Geobacillus sp. (strain WCH70)</name>
    <dbReference type="NCBI Taxonomy" id="471223"/>
    <lineage>
        <taxon>Bacteria</taxon>
        <taxon>Bacillati</taxon>
        <taxon>Bacillota</taxon>
        <taxon>Bacilli</taxon>
        <taxon>Bacillales</taxon>
        <taxon>Anoxybacillaceae</taxon>
        <taxon>Geobacillus</taxon>
    </lineage>
</organism>
<reference key="1">
    <citation type="submission" date="2009-06" db="EMBL/GenBank/DDBJ databases">
        <title>Complete sequence of chromosome of Geopacillus sp. WCH70.</title>
        <authorList>
            <consortium name="US DOE Joint Genome Institute"/>
            <person name="Lucas S."/>
            <person name="Copeland A."/>
            <person name="Lapidus A."/>
            <person name="Glavina del Rio T."/>
            <person name="Dalin E."/>
            <person name="Tice H."/>
            <person name="Bruce D."/>
            <person name="Goodwin L."/>
            <person name="Pitluck S."/>
            <person name="Chertkov O."/>
            <person name="Brettin T."/>
            <person name="Detter J.C."/>
            <person name="Han C."/>
            <person name="Larimer F."/>
            <person name="Land M."/>
            <person name="Hauser L."/>
            <person name="Kyrpides N."/>
            <person name="Mikhailova N."/>
            <person name="Brumm P."/>
            <person name="Mead D.A."/>
            <person name="Richardson P."/>
        </authorList>
    </citation>
    <scope>NUCLEOTIDE SEQUENCE [LARGE SCALE GENOMIC DNA]</scope>
    <source>
        <strain>WCH70</strain>
    </source>
</reference>
<sequence length="201" mass="22744">MIEFVRGYVDYVCPEYIVIDNNGIGYQIFTPNPFSFQESRDTIVTVYTYQYVREDTLALYGFRTREERTLFAKLLQVSGIGPKGGLAILAAGQPEQLVEAIEQENETFLCKFPGVGKKTARQMILDLKGKLTAVTAKTFPDLFHLQEESARPHLSALEEAIEALKALGYAEREIQKVVPSLMKENLSTDQYVKRALQQLLK</sequence>
<dbReference type="EMBL" id="CP001638">
    <property type="protein sequence ID" value="ACS25217.1"/>
    <property type="molecule type" value="Genomic_DNA"/>
</dbReference>
<dbReference type="SMR" id="C5D5E9"/>
<dbReference type="STRING" id="471223.GWCH70_2522"/>
<dbReference type="KEGG" id="gwc:GWCH70_2522"/>
<dbReference type="eggNOG" id="COG0632">
    <property type="taxonomic scope" value="Bacteria"/>
</dbReference>
<dbReference type="HOGENOM" id="CLU_087936_1_0_9"/>
<dbReference type="OrthoDB" id="5293449at2"/>
<dbReference type="GO" id="GO:0005737">
    <property type="term" value="C:cytoplasm"/>
    <property type="evidence" value="ECO:0007669"/>
    <property type="project" value="UniProtKB-SubCell"/>
</dbReference>
<dbReference type="GO" id="GO:0009379">
    <property type="term" value="C:Holliday junction helicase complex"/>
    <property type="evidence" value="ECO:0007669"/>
    <property type="project" value="InterPro"/>
</dbReference>
<dbReference type="GO" id="GO:0048476">
    <property type="term" value="C:Holliday junction resolvase complex"/>
    <property type="evidence" value="ECO:0007669"/>
    <property type="project" value="UniProtKB-UniRule"/>
</dbReference>
<dbReference type="GO" id="GO:0005524">
    <property type="term" value="F:ATP binding"/>
    <property type="evidence" value="ECO:0007669"/>
    <property type="project" value="InterPro"/>
</dbReference>
<dbReference type="GO" id="GO:0000400">
    <property type="term" value="F:four-way junction DNA binding"/>
    <property type="evidence" value="ECO:0007669"/>
    <property type="project" value="UniProtKB-UniRule"/>
</dbReference>
<dbReference type="GO" id="GO:0009378">
    <property type="term" value="F:four-way junction helicase activity"/>
    <property type="evidence" value="ECO:0007669"/>
    <property type="project" value="InterPro"/>
</dbReference>
<dbReference type="GO" id="GO:0006310">
    <property type="term" value="P:DNA recombination"/>
    <property type="evidence" value="ECO:0007669"/>
    <property type="project" value="UniProtKB-UniRule"/>
</dbReference>
<dbReference type="GO" id="GO:0006281">
    <property type="term" value="P:DNA repair"/>
    <property type="evidence" value="ECO:0007669"/>
    <property type="project" value="UniProtKB-UniRule"/>
</dbReference>
<dbReference type="CDD" id="cd14332">
    <property type="entry name" value="UBA_RuvA_C"/>
    <property type="match status" value="1"/>
</dbReference>
<dbReference type="Gene3D" id="1.10.150.20">
    <property type="entry name" value="5' to 3' exonuclease, C-terminal subdomain"/>
    <property type="match status" value="1"/>
</dbReference>
<dbReference type="Gene3D" id="1.10.8.10">
    <property type="entry name" value="DNA helicase RuvA subunit, C-terminal domain"/>
    <property type="match status" value="1"/>
</dbReference>
<dbReference type="Gene3D" id="2.40.50.140">
    <property type="entry name" value="Nucleic acid-binding proteins"/>
    <property type="match status" value="1"/>
</dbReference>
<dbReference type="HAMAP" id="MF_00031">
    <property type="entry name" value="DNA_HJ_migration_RuvA"/>
    <property type="match status" value="1"/>
</dbReference>
<dbReference type="InterPro" id="IPR013849">
    <property type="entry name" value="DNA_helicase_Holl-junc_RuvA_I"/>
</dbReference>
<dbReference type="InterPro" id="IPR003583">
    <property type="entry name" value="Hlx-hairpin-Hlx_DNA-bd_motif"/>
</dbReference>
<dbReference type="InterPro" id="IPR012340">
    <property type="entry name" value="NA-bd_OB-fold"/>
</dbReference>
<dbReference type="InterPro" id="IPR000085">
    <property type="entry name" value="RuvA"/>
</dbReference>
<dbReference type="InterPro" id="IPR010994">
    <property type="entry name" value="RuvA_2-like"/>
</dbReference>
<dbReference type="InterPro" id="IPR011114">
    <property type="entry name" value="RuvA_C"/>
</dbReference>
<dbReference type="InterPro" id="IPR036267">
    <property type="entry name" value="RuvA_C_sf"/>
</dbReference>
<dbReference type="NCBIfam" id="TIGR00084">
    <property type="entry name" value="ruvA"/>
    <property type="match status" value="1"/>
</dbReference>
<dbReference type="Pfam" id="PF14520">
    <property type="entry name" value="HHH_5"/>
    <property type="match status" value="1"/>
</dbReference>
<dbReference type="Pfam" id="PF07499">
    <property type="entry name" value="RuvA_C"/>
    <property type="match status" value="1"/>
</dbReference>
<dbReference type="Pfam" id="PF01330">
    <property type="entry name" value="RuvA_N"/>
    <property type="match status" value="1"/>
</dbReference>
<dbReference type="SMART" id="SM00278">
    <property type="entry name" value="HhH1"/>
    <property type="match status" value="2"/>
</dbReference>
<dbReference type="SUPFAM" id="SSF46929">
    <property type="entry name" value="DNA helicase RuvA subunit, C-terminal domain"/>
    <property type="match status" value="1"/>
</dbReference>
<dbReference type="SUPFAM" id="SSF50249">
    <property type="entry name" value="Nucleic acid-binding proteins"/>
    <property type="match status" value="1"/>
</dbReference>
<dbReference type="SUPFAM" id="SSF47781">
    <property type="entry name" value="RuvA domain 2-like"/>
    <property type="match status" value="1"/>
</dbReference>
<accession>C5D5E9</accession>
<feature type="chain" id="PRO_1000201993" description="Holliday junction branch migration complex subunit RuvA">
    <location>
        <begin position="1"/>
        <end position="201"/>
    </location>
</feature>
<feature type="region of interest" description="Domain I" evidence="1">
    <location>
        <begin position="1"/>
        <end position="63"/>
    </location>
</feature>
<feature type="region of interest" description="Domain II" evidence="1">
    <location>
        <begin position="64"/>
        <end position="142"/>
    </location>
</feature>
<feature type="region of interest" description="Flexible linker" evidence="1">
    <location>
        <begin position="143"/>
        <end position="153"/>
    </location>
</feature>
<feature type="region of interest" description="Domain III" evidence="1">
    <location>
        <begin position="153"/>
        <end position="201"/>
    </location>
</feature>